<dbReference type="EMBL" id="Z75208">
    <property type="protein sequence ID" value="CAA99584.1"/>
    <property type="molecule type" value="Genomic_DNA"/>
</dbReference>
<dbReference type="EMBL" id="AL009126">
    <property type="protein sequence ID" value="CAB14843.1"/>
    <property type="molecule type" value="Genomic_DNA"/>
</dbReference>
<dbReference type="PIR" id="H69983">
    <property type="entry name" value="H69983"/>
</dbReference>
<dbReference type="RefSeq" id="NP_390761.1">
    <property type="nucleotide sequence ID" value="NC_000964.3"/>
</dbReference>
<dbReference type="RefSeq" id="WP_003229493.1">
    <property type="nucleotide sequence ID" value="NZ_OZ025638.1"/>
</dbReference>
<dbReference type="SMR" id="P94520"/>
<dbReference type="FunCoup" id="P94520">
    <property type="interactions" value="20"/>
</dbReference>
<dbReference type="STRING" id="224308.BSU28830"/>
<dbReference type="PaxDb" id="224308-BSU28830"/>
<dbReference type="DNASU" id="937429"/>
<dbReference type="EnsemblBacteria" id="CAB14843">
    <property type="protein sequence ID" value="CAB14843"/>
    <property type="gene ID" value="BSU_28830"/>
</dbReference>
<dbReference type="GeneID" id="86872599"/>
<dbReference type="GeneID" id="937429"/>
<dbReference type="KEGG" id="bsu:BSU28830"/>
<dbReference type="PATRIC" id="fig|224308.179.peg.3131"/>
<dbReference type="eggNOG" id="ENOG5030CKE">
    <property type="taxonomic scope" value="Bacteria"/>
</dbReference>
<dbReference type="InParanoid" id="P94520"/>
<dbReference type="OrthoDB" id="2735026at2"/>
<dbReference type="BioCyc" id="BSUB:BSU28830-MONOMER"/>
<dbReference type="Proteomes" id="UP000001570">
    <property type="component" value="Chromosome"/>
</dbReference>
<dbReference type="GO" id="GO:0016020">
    <property type="term" value="C:membrane"/>
    <property type="evidence" value="ECO:0007669"/>
    <property type="project" value="UniProtKB-SubCell"/>
</dbReference>
<protein>
    <recommendedName>
        <fullName>Sigma-w pathway protein YsdB</fullName>
    </recommendedName>
</protein>
<keyword id="KW-0472">Membrane</keyword>
<keyword id="KW-1185">Reference proteome</keyword>
<keyword id="KW-0812">Transmembrane</keyword>
<keyword id="KW-1133">Transmembrane helix</keyword>
<evidence type="ECO:0000255" key="1"/>
<evidence type="ECO:0000269" key="2">
    <source>
    </source>
</evidence>
<evidence type="ECO:0000269" key="3">
    <source>
    </source>
</evidence>
<evidence type="ECO:0000305" key="4"/>
<organism>
    <name type="scientific">Bacillus subtilis (strain 168)</name>
    <dbReference type="NCBI Taxonomy" id="224308"/>
    <lineage>
        <taxon>Bacteria</taxon>
        <taxon>Bacillati</taxon>
        <taxon>Bacillota</taxon>
        <taxon>Bacilli</taxon>
        <taxon>Bacillales</taxon>
        <taxon>Bacillaceae</taxon>
        <taxon>Bacillus</taxon>
    </lineage>
</organism>
<reference key="1">
    <citation type="journal article" date="1996" name="Microbiology">
        <title>The dnaB-pheA (256 degrees-240 degrees) region of the Bacillus subtilis chromosome containing genes responsible for stress responses, the utilization of plant cell walls and primary metabolism.</title>
        <authorList>
            <person name="Wipat A."/>
            <person name="Carter N."/>
            <person name="Brignell C.S."/>
            <person name="Guy J.B."/>
            <person name="Piper K."/>
            <person name="Sanders J."/>
            <person name="Emmerson P.T."/>
            <person name="Harwood C.R."/>
        </authorList>
    </citation>
    <scope>NUCLEOTIDE SEQUENCE [GENOMIC DNA]</scope>
    <source>
        <strain>168</strain>
    </source>
</reference>
<reference key="2">
    <citation type="journal article" date="1997" name="Nature">
        <title>The complete genome sequence of the Gram-positive bacterium Bacillus subtilis.</title>
        <authorList>
            <person name="Kunst F."/>
            <person name="Ogasawara N."/>
            <person name="Moszer I."/>
            <person name="Albertini A.M."/>
            <person name="Alloni G."/>
            <person name="Azevedo V."/>
            <person name="Bertero M.G."/>
            <person name="Bessieres P."/>
            <person name="Bolotin A."/>
            <person name="Borchert S."/>
            <person name="Borriss R."/>
            <person name="Boursier L."/>
            <person name="Brans A."/>
            <person name="Braun M."/>
            <person name="Brignell S.C."/>
            <person name="Bron S."/>
            <person name="Brouillet S."/>
            <person name="Bruschi C.V."/>
            <person name="Caldwell B."/>
            <person name="Capuano V."/>
            <person name="Carter N.M."/>
            <person name="Choi S.-K."/>
            <person name="Codani J.-J."/>
            <person name="Connerton I.F."/>
            <person name="Cummings N.J."/>
            <person name="Daniel R.A."/>
            <person name="Denizot F."/>
            <person name="Devine K.M."/>
            <person name="Duesterhoeft A."/>
            <person name="Ehrlich S.D."/>
            <person name="Emmerson P.T."/>
            <person name="Entian K.-D."/>
            <person name="Errington J."/>
            <person name="Fabret C."/>
            <person name="Ferrari E."/>
            <person name="Foulger D."/>
            <person name="Fritz C."/>
            <person name="Fujita M."/>
            <person name="Fujita Y."/>
            <person name="Fuma S."/>
            <person name="Galizzi A."/>
            <person name="Galleron N."/>
            <person name="Ghim S.-Y."/>
            <person name="Glaser P."/>
            <person name="Goffeau A."/>
            <person name="Golightly E.J."/>
            <person name="Grandi G."/>
            <person name="Guiseppi G."/>
            <person name="Guy B.J."/>
            <person name="Haga K."/>
            <person name="Haiech J."/>
            <person name="Harwood C.R."/>
            <person name="Henaut A."/>
            <person name="Hilbert H."/>
            <person name="Holsappel S."/>
            <person name="Hosono S."/>
            <person name="Hullo M.-F."/>
            <person name="Itaya M."/>
            <person name="Jones L.-M."/>
            <person name="Joris B."/>
            <person name="Karamata D."/>
            <person name="Kasahara Y."/>
            <person name="Klaerr-Blanchard M."/>
            <person name="Klein C."/>
            <person name="Kobayashi Y."/>
            <person name="Koetter P."/>
            <person name="Koningstein G."/>
            <person name="Krogh S."/>
            <person name="Kumano M."/>
            <person name="Kurita K."/>
            <person name="Lapidus A."/>
            <person name="Lardinois S."/>
            <person name="Lauber J."/>
            <person name="Lazarevic V."/>
            <person name="Lee S.-M."/>
            <person name="Levine A."/>
            <person name="Liu H."/>
            <person name="Masuda S."/>
            <person name="Mauel C."/>
            <person name="Medigue C."/>
            <person name="Medina N."/>
            <person name="Mellado R.P."/>
            <person name="Mizuno M."/>
            <person name="Moestl D."/>
            <person name="Nakai S."/>
            <person name="Noback M."/>
            <person name="Noone D."/>
            <person name="O'Reilly M."/>
            <person name="Ogawa K."/>
            <person name="Ogiwara A."/>
            <person name="Oudega B."/>
            <person name="Park S.-H."/>
            <person name="Parro V."/>
            <person name="Pohl T.M."/>
            <person name="Portetelle D."/>
            <person name="Porwollik S."/>
            <person name="Prescott A.M."/>
            <person name="Presecan E."/>
            <person name="Pujic P."/>
            <person name="Purnelle B."/>
            <person name="Rapoport G."/>
            <person name="Rey M."/>
            <person name="Reynolds S."/>
            <person name="Rieger M."/>
            <person name="Rivolta C."/>
            <person name="Rocha E."/>
            <person name="Roche B."/>
            <person name="Rose M."/>
            <person name="Sadaie Y."/>
            <person name="Sato T."/>
            <person name="Scanlan E."/>
            <person name="Schleich S."/>
            <person name="Schroeter R."/>
            <person name="Scoffone F."/>
            <person name="Sekiguchi J."/>
            <person name="Sekowska A."/>
            <person name="Seror S.J."/>
            <person name="Serror P."/>
            <person name="Shin B.-S."/>
            <person name="Soldo B."/>
            <person name="Sorokin A."/>
            <person name="Tacconi E."/>
            <person name="Takagi T."/>
            <person name="Takahashi H."/>
            <person name="Takemaru K."/>
            <person name="Takeuchi M."/>
            <person name="Tamakoshi A."/>
            <person name="Tanaka T."/>
            <person name="Terpstra P."/>
            <person name="Tognoni A."/>
            <person name="Tosato V."/>
            <person name="Uchiyama S."/>
            <person name="Vandenbol M."/>
            <person name="Vannier F."/>
            <person name="Vassarotti A."/>
            <person name="Viari A."/>
            <person name="Wambutt R."/>
            <person name="Wedler E."/>
            <person name="Wedler H."/>
            <person name="Weitzenegger T."/>
            <person name="Winters P."/>
            <person name="Wipat A."/>
            <person name="Yamamoto H."/>
            <person name="Yamane K."/>
            <person name="Yasumoto K."/>
            <person name="Yata K."/>
            <person name="Yoshida K."/>
            <person name="Yoshikawa H.-F."/>
            <person name="Zumstein E."/>
            <person name="Yoshikawa H."/>
            <person name="Danchin A."/>
        </authorList>
    </citation>
    <scope>NUCLEOTIDE SEQUENCE [LARGE SCALE GENOMIC DNA]</scope>
    <source>
        <strain>168</strain>
    </source>
</reference>
<reference key="3">
    <citation type="journal article" date="2002" name="Mol. Microbiol.">
        <title>Antibiotics that inhibit cell wall biosynthesis induce expression of the Bacillus subtilis sigma(W) and sigma(M) regulons.</title>
        <authorList>
            <person name="Cao M."/>
            <person name="Wang T."/>
            <person name="Ye R."/>
            <person name="Helmann J.D."/>
        </authorList>
    </citation>
    <scope>INDUCTION</scope>
</reference>
<reference key="4">
    <citation type="journal article" date="2006" name="Genes Dev.">
        <title>Evidence for a novel protease governing regulated intramembrane proteolysis and resistance to antimicrobial peptides in Bacillus subtilis.</title>
        <authorList>
            <person name="Ellermeier C.D."/>
            <person name="Losick R."/>
        </authorList>
    </citation>
    <scope>FUNCTION</scope>
</reference>
<name>YSDB_BACSU</name>
<gene>
    <name type="primary">ysdB</name>
    <name type="ordered locus">BSU28830</name>
</gene>
<proteinExistence type="evidence at transcript level"/>
<accession>P94520</accession>
<accession>Q795W5</accession>
<feature type="chain" id="PRO_0000248144" description="Sigma-w pathway protein YsdB">
    <location>
        <begin position="1"/>
        <end position="130"/>
    </location>
</feature>
<feature type="transmembrane region" description="Helical" evidence="1">
    <location>
        <begin position="2"/>
        <end position="22"/>
    </location>
</feature>
<comment type="function">
    <text evidence="3">May mediate a negative feedback loop that down-regulates the expression of the sigma-W regulon following the activation of sigma-W in response to conditions of cell envelope stress. Might interact with and inhibit the activity of the protease PrsW, or could bind to the anti-sigma-W factor RsiW and thereby protect it from PrsW-mediated cleavage.</text>
</comment>
<comment type="subcellular location">
    <subcellularLocation>
        <location evidence="4">Membrane</location>
        <topology evidence="4">Single-pass membrane protein</topology>
    </subcellularLocation>
</comment>
<comment type="induction">
    <text evidence="2">Expressed under the control of the sigma-W factor.</text>
</comment>
<sequence length="130" mass="15572">MFVMVLRIILLALFAYCIYAVVKYVANPKRRLKLAQSKEHFYIIDEQNNTRKNFQLTYKGVLFEGEKHIPSKDHPLFIHTIFVWTESPEKLKHFSAKDFENIEEKVLERYPNCKIDWDQPIKLAKKAEER</sequence>